<comment type="function">
    <text evidence="1">Catalyzes the 2'-O-methylation at nucleotide C2498 in 23S rRNA.</text>
</comment>
<comment type="catalytic activity">
    <reaction evidence="1">
        <text>cytidine(2498) in 23S rRNA + S-adenosyl-L-methionine = 2'-O-methylcytidine(2498) in 23S rRNA + S-adenosyl-L-homocysteine + H(+)</text>
        <dbReference type="Rhea" id="RHEA:42788"/>
        <dbReference type="Rhea" id="RHEA-COMP:10244"/>
        <dbReference type="Rhea" id="RHEA-COMP:10245"/>
        <dbReference type="ChEBI" id="CHEBI:15378"/>
        <dbReference type="ChEBI" id="CHEBI:57856"/>
        <dbReference type="ChEBI" id="CHEBI:59789"/>
        <dbReference type="ChEBI" id="CHEBI:74495"/>
        <dbReference type="ChEBI" id="CHEBI:82748"/>
        <dbReference type="EC" id="2.1.1.186"/>
    </reaction>
</comment>
<comment type="subunit">
    <text evidence="1">Monomer.</text>
</comment>
<comment type="subcellular location">
    <subcellularLocation>
        <location evidence="1">Cytoplasm</location>
    </subcellularLocation>
</comment>
<comment type="similarity">
    <text evidence="1">Belongs to the class I-like SAM-binding methyltransferase superfamily. RNA methyltransferase RlmE family. RlmM subfamily.</text>
</comment>
<accession>B5FTY5</accession>
<protein>
    <recommendedName>
        <fullName evidence="1">Ribosomal RNA large subunit methyltransferase M</fullName>
        <ecNumber evidence="1">2.1.1.186</ecNumber>
    </recommendedName>
    <alternativeName>
        <fullName evidence="1">23S rRNA (cytidine2498-2'-O)-methyltransferase</fullName>
    </alternativeName>
    <alternativeName>
        <fullName evidence="1">23S rRNA 2'-O-ribose methyltransferase RlmM</fullName>
    </alternativeName>
</protein>
<dbReference type="EC" id="2.1.1.186" evidence="1"/>
<dbReference type="EMBL" id="CP001144">
    <property type="protein sequence ID" value="ACH77417.1"/>
    <property type="molecule type" value="Genomic_DNA"/>
</dbReference>
<dbReference type="RefSeq" id="WP_001045489.1">
    <property type="nucleotide sequence ID" value="NC_011205.1"/>
</dbReference>
<dbReference type="SMR" id="B5FTY5"/>
<dbReference type="KEGG" id="sed:SeD_A3305"/>
<dbReference type="HOGENOM" id="CLU_043780_0_0_6"/>
<dbReference type="Proteomes" id="UP000008322">
    <property type="component" value="Chromosome"/>
</dbReference>
<dbReference type="GO" id="GO:0005737">
    <property type="term" value="C:cytoplasm"/>
    <property type="evidence" value="ECO:0007669"/>
    <property type="project" value="UniProtKB-SubCell"/>
</dbReference>
<dbReference type="GO" id="GO:0008757">
    <property type="term" value="F:S-adenosylmethionine-dependent methyltransferase activity"/>
    <property type="evidence" value="ECO:0007669"/>
    <property type="project" value="UniProtKB-UniRule"/>
</dbReference>
<dbReference type="GO" id="GO:0032259">
    <property type="term" value="P:methylation"/>
    <property type="evidence" value="ECO:0007669"/>
    <property type="project" value="UniProtKB-KW"/>
</dbReference>
<dbReference type="GO" id="GO:0006364">
    <property type="term" value="P:rRNA processing"/>
    <property type="evidence" value="ECO:0007669"/>
    <property type="project" value="UniProtKB-UniRule"/>
</dbReference>
<dbReference type="FunFam" id="3.30.2300.20:FF:000001">
    <property type="entry name" value="Ribosomal RNA large subunit methyltransferase M"/>
    <property type="match status" value="1"/>
</dbReference>
<dbReference type="FunFam" id="3.30.70.2810:FF:000001">
    <property type="entry name" value="Ribosomal RNA large subunit methyltransferase M"/>
    <property type="match status" value="1"/>
</dbReference>
<dbReference type="FunFam" id="3.40.50.150:FF:000020">
    <property type="entry name" value="Ribosomal RNA large subunit methyltransferase M"/>
    <property type="match status" value="1"/>
</dbReference>
<dbReference type="Gene3D" id="3.30.2300.20">
    <property type="match status" value="1"/>
</dbReference>
<dbReference type="Gene3D" id="3.30.70.2810">
    <property type="match status" value="1"/>
</dbReference>
<dbReference type="Gene3D" id="3.40.50.150">
    <property type="entry name" value="Vaccinia Virus protein VP39"/>
    <property type="match status" value="1"/>
</dbReference>
<dbReference type="HAMAP" id="MF_01551">
    <property type="entry name" value="23SrRNA_methyltr_M"/>
    <property type="match status" value="1"/>
</dbReference>
<dbReference type="InterPro" id="IPR040739">
    <property type="entry name" value="RlmM_FDX"/>
</dbReference>
<dbReference type="InterPro" id="IPR048646">
    <property type="entry name" value="RlmM_THUMP-like"/>
</dbReference>
<dbReference type="InterPro" id="IPR002877">
    <property type="entry name" value="RNA_MeTrfase_FtsJ_dom"/>
</dbReference>
<dbReference type="InterPro" id="IPR011224">
    <property type="entry name" value="rRNA_MeTrfase_M"/>
</dbReference>
<dbReference type="InterPro" id="IPR029063">
    <property type="entry name" value="SAM-dependent_MTases_sf"/>
</dbReference>
<dbReference type="NCBIfam" id="NF008734">
    <property type="entry name" value="PRK11760.1"/>
    <property type="match status" value="1"/>
</dbReference>
<dbReference type="PANTHER" id="PTHR37524">
    <property type="entry name" value="RIBOSOMAL RNA LARGE SUBUNIT METHYLTRANSFERASE M"/>
    <property type="match status" value="1"/>
</dbReference>
<dbReference type="PANTHER" id="PTHR37524:SF2">
    <property type="entry name" value="RIBOSOMAL RNA METHYLTRANSFERASE FTSJ DOMAIN-CONTAINING PROTEIN"/>
    <property type="match status" value="1"/>
</dbReference>
<dbReference type="Pfam" id="PF01728">
    <property type="entry name" value="FtsJ"/>
    <property type="match status" value="1"/>
</dbReference>
<dbReference type="Pfam" id="PF18125">
    <property type="entry name" value="RlmM_FDX"/>
    <property type="match status" value="1"/>
</dbReference>
<dbReference type="Pfam" id="PF21239">
    <property type="entry name" value="RLMM_N"/>
    <property type="match status" value="1"/>
</dbReference>
<dbReference type="PIRSF" id="PIRSF028774">
    <property type="entry name" value="UCP028774"/>
    <property type="match status" value="1"/>
</dbReference>
<dbReference type="SUPFAM" id="SSF53335">
    <property type="entry name" value="S-adenosyl-L-methionine-dependent methyltransferases"/>
    <property type="match status" value="1"/>
</dbReference>
<keyword id="KW-0963">Cytoplasm</keyword>
<keyword id="KW-0489">Methyltransferase</keyword>
<keyword id="KW-0698">rRNA processing</keyword>
<keyword id="KW-0949">S-adenosyl-L-methionine</keyword>
<keyword id="KW-0808">Transferase</keyword>
<gene>
    <name evidence="1" type="primary">rlmM</name>
    <name type="ordered locus">SeD_A3305</name>
</gene>
<proteinExistence type="inferred from homology"/>
<name>RLMM_SALDC</name>
<organism>
    <name type="scientific">Salmonella dublin (strain CT_02021853)</name>
    <dbReference type="NCBI Taxonomy" id="439851"/>
    <lineage>
        <taxon>Bacteria</taxon>
        <taxon>Pseudomonadati</taxon>
        <taxon>Pseudomonadota</taxon>
        <taxon>Gammaproteobacteria</taxon>
        <taxon>Enterobacterales</taxon>
        <taxon>Enterobacteriaceae</taxon>
        <taxon>Salmonella</taxon>
    </lineage>
</organism>
<evidence type="ECO:0000255" key="1">
    <source>
        <dbReference type="HAMAP-Rule" id="MF_01551"/>
    </source>
</evidence>
<sequence>MNKVVLLCRPGFEKECAAEITDKAGKREIFGFARVKENAGYVIYECYQPEDGEKLISELPFSSLIFARQWFVVGELLQHLPPEDRITPIVGMLQGVVEKGGELRVEIADTNESKELMKFCRKFTVPLRAALRDAGVLTNYETPKRPVVHVFFIAPGCCYTGYSFAHNNSPFYMGIPRLKFPSDAPSRSTLKLEEALHVFIPEDEWDERLANGMYAVDLGACPGGWTYQLVKRNMWVYSVDNGPMAQSLMDTGQVTWLREDGFRYRPNRNNISWMVCDMVEKPAKVTALMAQWLVNGWCRETIFNLKLPMKKRYEEVSHNLAYLQAQLDEHGVNAQIQARQLYHDREEVTVHVRRLWAAVGGRRDER</sequence>
<reference key="1">
    <citation type="journal article" date="2011" name="J. Bacteriol.">
        <title>Comparative genomics of 28 Salmonella enterica isolates: evidence for CRISPR-mediated adaptive sublineage evolution.</title>
        <authorList>
            <person name="Fricke W.F."/>
            <person name="Mammel M.K."/>
            <person name="McDermott P.F."/>
            <person name="Tartera C."/>
            <person name="White D.G."/>
            <person name="Leclerc J.E."/>
            <person name="Ravel J."/>
            <person name="Cebula T.A."/>
        </authorList>
    </citation>
    <scope>NUCLEOTIDE SEQUENCE [LARGE SCALE GENOMIC DNA]</scope>
    <source>
        <strain>CT_02021853</strain>
    </source>
</reference>
<feature type="chain" id="PRO_1000201526" description="Ribosomal RNA large subunit methyltransferase M">
    <location>
        <begin position="1"/>
        <end position="366"/>
    </location>
</feature>
<feature type="active site" description="Proton acceptor" evidence="1">
    <location>
        <position position="306"/>
    </location>
</feature>
<feature type="binding site" evidence="1">
    <location>
        <position position="188"/>
    </location>
    <ligand>
        <name>S-adenosyl-L-methionine</name>
        <dbReference type="ChEBI" id="CHEBI:59789"/>
    </ligand>
</feature>
<feature type="binding site" evidence="1">
    <location>
        <begin position="221"/>
        <end position="224"/>
    </location>
    <ligand>
        <name>S-adenosyl-L-methionine</name>
        <dbReference type="ChEBI" id="CHEBI:59789"/>
    </ligand>
</feature>
<feature type="binding site" evidence="1">
    <location>
        <position position="240"/>
    </location>
    <ligand>
        <name>S-adenosyl-L-methionine</name>
        <dbReference type="ChEBI" id="CHEBI:59789"/>
    </ligand>
</feature>
<feature type="binding site" evidence="1">
    <location>
        <position position="260"/>
    </location>
    <ligand>
        <name>S-adenosyl-L-methionine</name>
        <dbReference type="ChEBI" id="CHEBI:59789"/>
    </ligand>
</feature>
<feature type="binding site" evidence="1">
    <location>
        <position position="277"/>
    </location>
    <ligand>
        <name>S-adenosyl-L-methionine</name>
        <dbReference type="ChEBI" id="CHEBI:59789"/>
    </ligand>
</feature>